<evidence type="ECO:0000250" key="1"/>
<evidence type="ECO:0000250" key="2">
    <source>
        <dbReference type="UniProtKB" id="P0A9N4"/>
    </source>
</evidence>
<evidence type="ECO:0000255" key="3">
    <source>
        <dbReference type="PROSITE-ProRule" id="PRU01266"/>
    </source>
</evidence>
<evidence type="ECO:0000305" key="4"/>
<keyword id="KW-0004">4Fe-4S</keyword>
<keyword id="KW-0119">Carbohydrate metabolism</keyword>
<keyword id="KW-0963">Cytoplasm</keyword>
<keyword id="KW-0313">Glucose metabolism</keyword>
<keyword id="KW-0408">Iron</keyword>
<keyword id="KW-0411">Iron-sulfur</keyword>
<keyword id="KW-0479">Metal-binding</keyword>
<keyword id="KW-0560">Oxidoreductase</keyword>
<keyword id="KW-0949">S-adenosyl-L-methionine</keyword>
<feature type="chain" id="PRO_0000271713" description="Pyruvate formate-lyase-activating enzyme">
    <location>
        <begin position="1"/>
        <end position="251"/>
    </location>
</feature>
<feature type="domain" description="Radical SAM core" evidence="3">
    <location>
        <begin position="15"/>
        <end position="244"/>
    </location>
</feature>
<feature type="binding site" evidence="2">
    <location>
        <position position="29"/>
    </location>
    <ligand>
        <name>[4Fe-4S] cluster</name>
        <dbReference type="ChEBI" id="CHEBI:49883"/>
        <note>4Fe-4S-S-AdoMet</note>
    </ligand>
</feature>
<feature type="binding site" evidence="2">
    <location>
        <position position="33"/>
    </location>
    <ligand>
        <name>[4Fe-4S] cluster</name>
        <dbReference type="ChEBI" id="CHEBI:49883"/>
        <note>4Fe-4S-S-AdoMet</note>
    </ligand>
</feature>
<feature type="binding site" evidence="2">
    <location>
        <begin position="35"/>
        <end position="37"/>
    </location>
    <ligand>
        <name>S-adenosyl-L-methionine</name>
        <dbReference type="ChEBI" id="CHEBI:59789"/>
    </ligand>
</feature>
<feature type="binding site" evidence="2">
    <location>
        <position position="36"/>
    </location>
    <ligand>
        <name>[4Fe-4S] cluster</name>
        <dbReference type="ChEBI" id="CHEBI:49883"/>
        <note>4Fe-4S-S-AdoMet</note>
    </ligand>
</feature>
<feature type="binding site" evidence="2">
    <location>
        <position position="79"/>
    </location>
    <ligand>
        <name>S-adenosyl-L-methionine</name>
        <dbReference type="ChEBI" id="CHEBI:59789"/>
    </ligand>
</feature>
<feature type="binding site" evidence="2">
    <location>
        <begin position="134"/>
        <end position="136"/>
    </location>
    <ligand>
        <name>S-adenosyl-L-methionine</name>
        <dbReference type="ChEBI" id="CHEBI:59789"/>
    </ligand>
</feature>
<feature type="binding site" evidence="2">
    <location>
        <position position="207"/>
    </location>
    <ligand>
        <name>S-adenosyl-L-methionine</name>
        <dbReference type="ChEBI" id="CHEBI:59789"/>
    </ligand>
</feature>
<proteinExistence type="evidence at protein level"/>
<comment type="function">
    <text evidence="1">Activation of pyruvate formate-lyase under anaerobic conditions by generation of an organic free radical, using S-adenosylmethionine and reduced flavodoxin as cosubstrates to produce 5'-deoxy-adenosine.</text>
</comment>
<comment type="catalytic activity">
    <reaction>
        <text>glycyl-[formate C-acetyltransferase] + reduced [flavodoxin] + S-adenosyl-L-methionine = glycin-2-yl radical-[formate C-acetyltransferase] + semiquinone [flavodoxin] + 5'-deoxyadenosine + L-methionine + H(+)</text>
        <dbReference type="Rhea" id="RHEA:19225"/>
        <dbReference type="Rhea" id="RHEA-COMP:10622"/>
        <dbReference type="Rhea" id="RHEA-COMP:12190"/>
        <dbReference type="Rhea" id="RHEA-COMP:12191"/>
        <dbReference type="Rhea" id="RHEA-COMP:14480"/>
        <dbReference type="ChEBI" id="CHEBI:15378"/>
        <dbReference type="ChEBI" id="CHEBI:17319"/>
        <dbReference type="ChEBI" id="CHEBI:29947"/>
        <dbReference type="ChEBI" id="CHEBI:32722"/>
        <dbReference type="ChEBI" id="CHEBI:57618"/>
        <dbReference type="ChEBI" id="CHEBI:57844"/>
        <dbReference type="ChEBI" id="CHEBI:59789"/>
        <dbReference type="ChEBI" id="CHEBI:140311"/>
        <dbReference type="EC" id="1.97.1.4"/>
    </reaction>
</comment>
<comment type="cofactor">
    <cofactor evidence="1">
        <name>[4Fe-4S] cluster</name>
        <dbReference type="ChEBI" id="CHEBI:49883"/>
    </cofactor>
    <text evidence="1">Binds 1 [4Fe-4S] cluster. The cluster is coordinated with 3 cysteines and an exchangeable S-adenosyl-L-methionine.</text>
</comment>
<comment type="subcellular location">
    <subcellularLocation>
        <location evidence="1">Cytoplasm</location>
    </subcellularLocation>
</comment>
<comment type="similarity">
    <text evidence="4">Belongs to the organic radical-activating enzymes family.</text>
</comment>
<protein>
    <recommendedName>
        <fullName>Pyruvate formate-lyase-activating enzyme</fullName>
        <shortName>PFL-activating enzyme</shortName>
        <ecNumber>1.97.1.4</ecNumber>
    </recommendedName>
</protein>
<reference key="1">
    <citation type="journal article" date="2001" name="Lancet">
        <title>Whole genome sequencing of meticillin-resistant Staphylococcus aureus.</title>
        <authorList>
            <person name="Kuroda M."/>
            <person name="Ohta T."/>
            <person name="Uchiyama I."/>
            <person name="Baba T."/>
            <person name="Yuzawa H."/>
            <person name="Kobayashi I."/>
            <person name="Cui L."/>
            <person name="Oguchi A."/>
            <person name="Aoki K."/>
            <person name="Nagai Y."/>
            <person name="Lian J.-Q."/>
            <person name="Ito T."/>
            <person name="Kanamori M."/>
            <person name="Matsumaru H."/>
            <person name="Maruyama A."/>
            <person name="Murakami H."/>
            <person name="Hosoyama A."/>
            <person name="Mizutani-Ui Y."/>
            <person name="Takahashi N.K."/>
            <person name="Sawano T."/>
            <person name="Inoue R."/>
            <person name="Kaito C."/>
            <person name="Sekimizu K."/>
            <person name="Hirakawa H."/>
            <person name="Kuhara S."/>
            <person name="Goto S."/>
            <person name="Yabuzaki J."/>
            <person name="Kanehisa M."/>
            <person name="Yamashita A."/>
            <person name="Oshima K."/>
            <person name="Furuya K."/>
            <person name="Yoshino C."/>
            <person name="Shiba T."/>
            <person name="Hattori M."/>
            <person name="Ogasawara N."/>
            <person name="Hayashi H."/>
            <person name="Hiramatsu K."/>
        </authorList>
    </citation>
    <scope>NUCLEOTIDE SEQUENCE [LARGE SCALE GENOMIC DNA]</scope>
    <source>
        <strain>N315</strain>
    </source>
</reference>
<reference key="2">
    <citation type="submission" date="2007-10" db="UniProtKB">
        <title>Shotgun proteomic analysis of total and membrane protein extracts of S. aureus strain N315.</title>
        <authorList>
            <person name="Vaezzadeh A.R."/>
            <person name="Deshusses J."/>
            <person name="Lescuyer P."/>
            <person name="Hochstrasser D.F."/>
        </authorList>
    </citation>
    <scope>IDENTIFICATION BY MASS SPECTROMETRY [LARGE SCALE ANALYSIS]</scope>
    <source>
        <strain>N315</strain>
    </source>
</reference>
<dbReference type="EC" id="1.97.1.4"/>
<dbReference type="EMBL" id="BA000018">
    <property type="protein sequence ID" value="BAB41441.1"/>
    <property type="molecule type" value="Genomic_DNA"/>
</dbReference>
<dbReference type="PIR" id="F89785">
    <property type="entry name" value="F89785"/>
</dbReference>
<dbReference type="RefSeq" id="WP_000911657.1">
    <property type="nucleotide sequence ID" value="NC_002745.2"/>
</dbReference>
<dbReference type="SMR" id="Q7A7X5"/>
<dbReference type="EnsemblBacteria" id="BAB41441">
    <property type="protein sequence ID" value="BAB41441"/>
    <property type="gene ID" value="BAB41441"/>
</dbReference>
<dbReference type="KEGG" id="sau:SA0219"/>
<dbReference type="HOGENOM" id="CLU_058969_1_1_9"/>
<dbReference type="GO" id="GO:0005737">
    <property type="term" value="C:cytoplasm"/>
    <property type="evidence" value="ECO:0007669"/>
    <property type="project" value="UniProtKB-SubCell"/>
</dbReference>
<dbReference type="GO" id="GO:0051539">
    <property type="term" value="F:4 iron, 4 sulfur cluster binding"/>
    <property type="evidence" value="ECO:0007669"/>
    <property type="project" value="UniProtKB-KW"/>
</dbReference>
<dbReference type="GO" id="GO:0043365">
    <property type="term" value="F:[formate-C-acetyltransferase]-activating enzyme activity"/>
    <property type="evidence" value="ECO:0007669"/>
    <property type="project" value="UniProtKB-EC"/>
</dbReference>
<dbReference type="GO" id="GO:0046872">
    <property type="term" value="F:metal ion binding"/>
    <property type="evidence" value="ECO:0007669"/>
    <property type="project" value="UniProtKB-KW"/>
</dbReference>
<dbReference type="GO" id="GO:0006006">
    <property type="term" value="P:glucose metabolic process"/>
    <property type="evidence" value="ECO:0007669"/>
    <property type="project" value="UniProtKB-KW"/>
</dbReference>
<dbReference type="CDD" id="cd01335">
    <property type="entry name" value="Radical_SAM"/>
    <property type="match status" value="1"/>
</dbReference>
<dbReference type="Gene3D" id="3.20.20.70">
    <property type="entry name" value="Aldolase class I"/>
    <property type="match status" value="1"/>
</dbReference>
<dbReference type="InterPro" id="IPR013785">
    <property type="entry name" value="Aldolase_TIM"/>
</dbReference>
<dbReference type="InterPro" id="IPR040074">
    <property type="entry name" value="BssD/PflA/YjjW"/>
</dbReference>
<dbReference type="InterPro" id="IPR034457">
    <property type="entry name" value="Organic_radical-activating"/>
</dbReference>
<dbReference type="InterPro" id="IPR012839">
    <property type="entry name" value="Organic_radical_activase"/>
</dbReference>
<dbReference type="InterPro" id="IPR012838">
    <property type="entry name" value="PFL1_activating"/>
</dbReference>
<dbReference type="InterPro" id="IPR034465">
    <property type="entry name" value="Pyruvate_for-lyase_activase"/>
</dbReference>
<dbReference type="InterPro" id="IPR001989">
    <property type="entry name" value="Radical_activat_CS"/>
</dbReference>
<dbReference type="InterPro" id="IPR007197">
    <property type="entry name" value="rSAM"/>
</dbReference>
<dbReference type="NCBIfam" id="TIGR02493">
    <property type="entry name" value="PFLA"/>
    <property type="match status" value="1"/>
</dbReference>
<dbReference type="PANTHER" id="PTHR30352:SF5">
    <property type="entry name" value="PYRUVATE FORMATE-LYASE 1-ACTIVATING ENZYME"/>
    <property type="match status" value="1"/>
</dbReference>
<dbReference type="PANTHER" id="PTHR30352">
    <property type="entry name" value="PYRUVATE FORMATE-LYASE-ACTIVATING ENZYME"/>
    <property type="match status" value="1"/>
</dbReference>
<dbReference type="Pfam" id="PF13353">
    <property type="entry name" value="Fer4_12"/>
    <property type="match status" value="1"/>
</dbReference>
<dbReference type="Pfam" id="PF04055">
    <property type="entry name" value="Radical_SAM"/>
    <property type="match status" value="1"/>
</dbReference>
<dbReference type="PIRSF" id="PIRSF000371">
    <property type="entry name" value="PFL_act_enz"/>
    <property type="match status" value="1"/>
</dbReference>
<dbReference type="SFLD" id="SFLDG01118">
    <property type="entry name" value="activating_enzymes__group_2"/>
    <property type="match status" value="1"/>
</dbReference>
<dbReference type="SFLD" id="SFLDF00278">
    <property type="entry name" value="pyruvate_formate-lyase_activas"/>
    <property type="match status" value="1"/>
</dbReference>
<dbReference type="SUPFAM" id="SSF102114">
    <property type="entry name" value="Radical SAM enzymes"/>
    <property type="match status" value="1"/>
</dbReference>
<dbReference type="PROSITE" id="PS01087">
    <property type="entry name" value="RADICAL_ACTIVATING"/>
    <property type="match status" value="1"/>
</dbReference>
<dbReference type="PROSITE" id="PS51918">
    <property type="entry name" value="RADICAL_SAM"/>
    <property type="match status" value="1"/>
</dbReference>
<name>PFLA_STAAN</name>
<sequence length="251" mass="28499">MLKGHLHSVESLGTVDGPGLRYILFTQGCLLRCLYCHNPDTWKISEPSREVTVDEMVNEILPYKPYFDASGGGVTVSGGEPLLQMPFLEKLFAELKENGVHTCLDTSAGCANDTKAFQRHFEELQKHTDLILLDIKHIDNDKHIRLTGKPNTHILNFARKLSDMKQPVWIRHVLVPGYSDDKDDLIKLGEFINSLDNVEKFEILPYHQLGVHKWKTLGIAYELEDVEAPDDEAVKAAYRYVNFKGKIPVEL</sequence>
<gene>
    <name type="primary">pflA</name>
    <name type="ordered locus">SA0219</name>
</gene>
<organism>
    <name type="scientific">Staphylococcus aureus (strain N315)</name>
    <dbReference type="NCBI Taxonomy" id="158879"/>
    <lineage>
        <taxon>Bacteria</taxon>
        <taxon>Bacillati</taxon>
        <taxon>Bacillota</taxon>
        <taxon>Bacilli</taxon>
        <taxon>Bacillales</taxon>
        <taxon>Staphylococcaceae</taxon>
        <taxon>Staphylococcus</taxon>
    </lineage>
</organism>
<accession>Q7A7X5</accession>